<feature type="chain" id="PRO_0000105635" description="HTH-type transcriptional regulator HdfR">
    <location>
        <begin position="1"/>
        <end position="278"/>
    </location>
</feature>
<feature type="domain" description="HTH lysR-type" evidence="1">
    <location>
        <begin position="1"/>
        <end position="58"/>
    </location>
</feature>
<feature type="DNA-binding region" description="H-T-H motif" evidence="1">
    <location>
        <begin position="18"/>
        <end position="37"/>
    </location>
</feature>
<keyword id="KW-0238">DNA-binding</keyword>
<keyword id="KW-0678">Repressor</keyword>
<keyword id="KW-0804">Transcription</keyword>
<keyword id="KW-0805">Transcription regulation</keyword>
<proteinExistence type="inferred from homology"/>
<accession>P0A2Q1</accession>
<accession>Q8Z336</accession>
<accession>Q9L6T4</accession>
<organism>
    <name type="scientific">Salmonella typhi</name>
    <dbReference type="NCBI Taxonomy" id="90370"/>
    <lineage>
        <taxon>Bacteria</taxon>
        <taxon>Pseudomonadati</taxon>
        <taxon>Pseudomonadota</taxon>
        <taxon>Gammaproteobacteria</taxon>
        <taxon>Enterobacterales</taxon>
        <taxon>Enterobacteriaceae</taxon>
        <taxon>Salmonella</taxon>
    </lineage>
</organism>
<sequence>MDTELLKTFLEVSRTRHFGRAAEALYLTQSAVSFRIRQLENQLGVNLFTRHRNNIRLTTAGEKLLPYAETLMNTWQAARKEVAHTSRHNEFSIGASASLWECMLNAWLGRLYQLQEPQSGLQFEARIAQRQSLVKQLHERQLDLLITTEAPKMDEFSSQLLGHFTLALYCSSPARKKSELNYLRLEWGPDFQQHETGLIAADEVPVLTTSSAELARQQLSALNGCSWLPVNWANEKGGLHTVADSATLSRPLYAIWLQNSDKYSLICDLLKTDVLDEQ</sequence>
<dbReference type="EMBL" id="AL513382">
    <property type="protein sequence ID" value="CAD09467.1"/>
    <property type="molecule type" value="Genomic_DNA"/>
</dbReference>
<dbReference type="EMBL" id="AE014613">
    <property type="protein sequence ID" value="AAO70970.1"/>
    <property type="molecule type" value="Genomic_DNA"/>
</dbReference>
<dbReference type="RefSeq" id="NP_457897.1">
    <property type="nucleotide sequence ID" value="NC_003198.1"/>
</dbReference>
<dbReference type="SMR" id="P0A2Q1"/>
<dbReference type="STRING" id="220341.gene:17587562"/>
<dbReference type="KEGG" id="stt:t3449"/>
<dbReference type="KEGG" id="sty:STY3708"/>
<dbReference type="PATRIC" id="fig|220341.7.peg.3779"/>
<dbReference type="eggNOG" id="COG0583">
    <property type="taxonomic scope" value="Bacteria"/>
</dbReference>
<dbReference type="HOGENOM" id="CLU_039613_8_2_6"/>
<dbReference type="OMA" id="ESLMNTW"/>
<dbReference type="Proteomes" id="UP000000541">
    <property type="component" value="Chromosome"/>
</dbReference>
<dbReference type="Proteomes" id="UP000002670">
    <property type="component" value="Chromosome"/>
</dbReference>
<dbReference type="GO" id="GO:0003677">
    <property type="term" value="F:DNA binding"/>
    <property type="evidence" value="ECO:0007669"/>
    <property type="project" value="UniProtKB-KW"/>
</dbReference>
<dbReference type="GO" id="GO:0003700">
    <property type="term" value="F:DNA-binding transcription factor activity"/>
    <property type="evidence" value="ECO:0007669"/>
    <property type="project" value="UniProtKB-UniRule"/>
</dbReference>
<dbReference type="GO" id="GO:0045892">
    <property type="term" value="P:negative regulation of DNA-templated transcription"/>
    <property type="evidence" value="ECO:0007669"/>
    <property type="project" value="UniProtKB-UniRule"/>
</dbReference>
<dbReference type="FunFam" id="1.10.10.10:FF:000001">
    <property type="entry name" value="LysR family transcriptional regulator"/>
    <property type="match status" value="1"/>
</dbReference>
<dbReference type="Gene3D" id="1.10.10.10">
    <property type="entry name" value="Winged helix-like DNA-binding domain superfamily/Winged helix DNA-binding domain"/>
    <property type="match status" value="1"/>
</dbReference>
<dbReference type="HAMAP" id="MF_01233">
    <property type="entry name" value="HTH_type_HdfR"/>
    <property type="match status" value="1"/>
</dbReference>
<dbReference type="InterPro" id="IPR050176">
    <property type="entry name" value="LTTR"/>
</dbReference>
<dbReference type="InterPro" id="IPR005119">
    <property type="entry name" value="LysR_subst-bd"/>
</dbReference>
<dbReference type="InterPro" id="IPR020890">
    <property type="entry name" value="Tscrpt_reg_HTH_HdfR"/>
</dbReference>
<dbReference type="InterPro" id="IPR000847">
    <property type="entry name" value="Tscrpt_reg_HTH_LysR"/>
</dbReference>
<dbReference type="InterPro" id="IPR036388">
    <property type="entry name" value="WH-like_DNA-bd_sf"/>
</dbReference>
<dbReference type="InterPro" id="IPR036390">
    <property type="entry name" value="WH_DNA-bd_sf"/>
</dbReference>
<dbReference type="NCBIfam" id="NF002946">
    <property type="entry name" value="PRK03601.1"/>
    <property type="match status" value="1"/>
</dbReference>
<dbReference type="PANTHER" id="PTHR30579:SF8">
    <property type="entry name" value="HTH-TYPE TRANSCRIPTIONAL REGULATOR HDFR"/>
    <property type="match status" value="1"/>
</dbReference>
<dbReference type="PANTHER" id="PTHR30579">
    <property type="entry name" value="TRANSCRIPTIONAL REGULATOR"/>
    <property type="match status" value="1"/>
</dbReference>
<dbReference type="Pfam" id="PF00126">
    <property type="entry name" value="HTH_1"/>
    <property type="match status" value="1"/>
</dbReference>
<dbReference type="Pfam" id="PF03466">
    <property type="entry name" value="LysR_substrate"/>
    <property type="match status" value="1"/>
</dbReference>
<dbReference type="PRINTS" id="PR00039">
    <property type="entry name" value="HTHLYSR"/>
</dbReference>
<dbReference type="SUPFAM" id="SSF53850">
    <property type="entry name" value="Periplasmic binding protein-like II"/>
    <property type="match status" value="1"/>
</dbReference>
<dbReference type="SUPFAM" id="SSF46785">
    <property type="entry name" value="Winged helix' DNA-binding domain"/>
    <property type="match status" value="1"/>
</dbReference>
<dbReference type="PROSITE" id="PS50931">
    <property type="entry name" value="HTH_LYSR"/>
    <property type="match status" value="1"/>
</dbReference>
<name>HDFR_SALTI</name>
<reference key="1">
    <citation type="journal article" date="2001" name="Nature">
        <title>Complete genome sequence of a multiple drug resistant Salmonella enterica serovar Typhi CT18.</title>
        <authorList>
            <person name="Parkhill J."/>
            <person name="Dougan G."/>
            <person name="James K.D."/>
            <person name="Thomson N.R."/>
            <person name="Pickard D."/>
            <person name="Wain J."/>
            <person name="Churcher C.M."/>
            <person name="Mungall K.L."/>
            <person name="Bentley S.D."/>
            <person name="Holden M.T.G."/>
            <person name="Sebaihia M."/>
            <person name="Baker S."/>
            <person name="Basham D."/>
            <person name="Brooks K."/>
            <person name="Chillingworth T."/>
            <person name="Connerton P."/>
            <person name="Cronin A."/>
            <person name="Davis P."/>
            <person name="Davies R.M."/>
            <person name="Dowd L."/>
            <person name="White N."/>
            <person name="Farrar J."/>
            <person name="Feltwell T."/>
            <person name="Hamlin N."/>
            <person name="Haque A."/>
            <person name="Hien T.T."/>
            <person name="Holroyd S."/>
            <person name="Jagels K."/>
            <person name="Krogh A."/>
            <person name="Larsen T.S."/>
            <person name="Leather S."/>
            <person name="Moule S."/>
            <person name="O'Gaora P."/>
            <person name="Parry C."/>
            <person name="Quail M.A."/>
            <person name="Rutherford K.M."/>
            <person name="Simmonds M."/>
            <person name="Skelton J."/>
            <person name="Stevens K."/>
            <person name="Whitehead S."/>
            <person name="Barrell B.G."/>
        </authorList>
    </citation>
    <scope>NUCLEOTIDE SEQUENCE [LARGE SCALE GENOMIC DNA]</scope>
    <source>
        <strain>CT18</strain>
    </source>
</reference>
<reference key="2">
    <citation type="journal article" date="2003" name="J. Bacteriol.">
        <title>Comparative genomics of Salmonella enterica serovar Typhi strains Ty2 and CT18.</title>
        <authorList>
            <person name="Deng W."/>
            <person name="Liou S.-R."/>
            <person name="Plunkett G. III"/>
            <person name="Mayhew G.F."/>
            <person name="Rose D.J."/>
            <person name="Burland V."/>
            <person name="Kodoyianni V."/>
            <person name="Schwartz D.C."/>
            <person name="Blattner F.R."/>
        </authorList>
    </citation>
    <scope>NUCLEOTIDE SEQUENCE [LARGE SCALE GENOMIC DNA]</scope>
    <source>
        <strain>ATCC 700931 / Ty2</strain>
    </source>
</reference>
<evidence type="ECO:0000255" key="1">
    <source>
        <dbReference type="HAMAP-Rule" id="MF_01233"/>
    </source>
</evidence>
<evidence type="ECO:0000305" key="2"/>
<protein>
    <recommendedName>
        <fullName evidence="1">HTH-type transcriptional regulator HdfR</fullName>
    </recommendedName>
    <alternativeName>
        <fullName evidence="1">H-NS-dependent flhDC regulator</fullName>
    </alternativeName>
</protein>
<gene>
    <name evidence="1" type="primary">hdfR</name>
    <name type="ordered locus">STY3708</name>
    <name type="ordered locus">t3449</name>
</gene>
<comment type="function">
    <text evidence="1">Negatively regulates the transcription of the flagellar master operon flhDC by binding to the upstream region of the operon.</text>
</comment>
<comment type="similarity">
    <text evidence="2">Belongs to the LysR transcriptional regulatory family.</text>
</comment>